<dbReference type="EC" id="4.6.1.-" evidence="4"/>
<dbReference type="EMBL" id="FJ171482">
    <property type="protein sequence ID" value="ACN48978.1"/>
    <property type="molecule type" value="mRNA"/>
</dbReference>
<dbReference type="SMR" id="C0JB47"/>
<dbReference type="GO" id="GO:0005576">
    <property type="term" value="C:extracellular region"/>
    <property type="evidence" value="ECO:0007669"/>
    <property type="project" value="UniProtKB-SubCell"/>
</dbReference>
<dbReference type="GO" id="GO:0016829">
    <property type="term" value="F:lyase activity"/>
    <property type="evidence" value="ECO:0007669"/>
    <property type="project" value="UniProtKB-KW"/>
</dbReference>
<dbReference type="GO" id="GO:0046872">
    <property type="term" value="F:metal ion binding"/>
    <property type="evidence" value="ECO:0007669"/>
    <property type="project" value="UniProtKB-KW"/>
</dbReference>
<dbReference type="GO" id="GO:0008081">
    <property type="term" value="F:phosphoric diester hydrolase activity"/>
    <property type="evidence" value="ECO:0007669"/>
    <property type="project" value="InterPro"/>
</dbReference>
<dbReference type="GO" id="GO:0090729">
    <property type="term" value="F:toxin activity"/>
    <property type="evidence" value="ECO:0007669"/>
    <property type="project" value="UniProtKB-KW"/>
</dbReference>
<dbReference type="GO" id="GO:0031640">
    <property type="term" value="P:killing of cells of another organism"/>
    <property type="evidence" value="ECO:0007669"/>
    <property type="project" value="UniProtKB-KW"/>
</dbReference>
<dbReference type="GO" id="GO:0016042">
    <property type="term" value="P:lipid catabolic process"/>
    <property type="evidence" value="ECO:0007669"/>
    <property type="project" value="UniProtKB-KW"/>
</dbReference>
<dbReference type="CDD" id="cd08576">
    <property type="entry name" value="GDPD_like_SMaseD_PLD"/>
    <property type="match status" value="1"/>
</dbReference>
<dbReference type="Gene3D" id="3.20.20.190">
    <property type="entry name" value="Phosphatidylinositol (PI) phosphodiesterase"/>
    <property type="match status" value="1"/>
</dbReference>
<dbReference type="InterPro" id="IPR017946">
    <property type="entry name" value="PLC-like_Pdiesterase_TIM-brl"/>
</dbReference>
<dbReference type="SUPFAM" id="SSF51695">
    <property type="entry name" value="PLC-like phosphodiesterases"/>
    <property type="match status" value="1"/>
</dbReference>
<name>B1U2_LOXSN</name>
<sequence length="276" mass="31553">FALAHMVNDFEILKSYLDEGANGIESDITFSDEGEPEYTFHGVPCDCRRWCDRSVGIDEYLQHLSDLTTPGNPKFRENLLVVVLDLKLNGLSQDALRQGGLRLADKLAAHYWTGNRKARAYFIISVPKTSESEFMRTFRKELDEINFGDMSAKIGFDFTDNGDFKETQKVYEGLGISEHIWASDGITNCIPLLFRGTDRLEDLTRQRDEPGYKYIDKVYAWTYDKETSVVKALELGVDGVMTNYADFVIKVLNKPEHSSKYRLATYDDNPFEKFTA</sequence>
<keyword id="KW-0204">Cytolysis</keyword>
<keyword id="KW-1061">Dermonecrotic toxin</keyword>
<keyword id="KW-1015">Disulfide bond</keyword>
<keyword id="KW-0354">Hemolysis</keyword>
<keyword id="KW-0442">Lipid degradation</keyword>
<keyword id="KW-0443">Lipid metabolism</keyword>
<keyword id="KW-0456">Lyase</keyword>
<keyword id="KW-0460">Magnesium</keyword>
<keyword id="KW-0479">Metal-binding</keyword>
<keyword id="KW-0964">Secreted</keyword>
<keyword id="KW-0800">Toxin</keyword>
<comment type="function">
    <text evidence="1 3">Dermonecrotic toxins cleave the phosphodiester linkage between the phosphate and headgroup of certain phospholipids (sphingolipid and lysolipid substrates), forming an alcohol (often choline) and a cyclic phosphate (By similarity). This toxin acts on sphingomyelin (SM) (By similarity). It may also act on ceramide phosphoethanolamine (CPE), lysophosphatidylcholine (LPC) and lysophosphatidylethanolamine (LPE), but not on lysophosphatidylserine (LPS), and lysophosphatidylglycerol (LPG) (By similarity). It acts by transphosphatidylation, releasing exclusively cyclic phosphate products as second products (By similarity). Induces dermonecrosis, hemolysis, increased vascular permeability, edema, inflammatory response, and platelet aggregation (By similarity).</text>
</comment>
<comment type="catalytic activity">
    <reaction evidence="1">
        <text>an N-(acyl)-sphingosylphosphocholine = an N-(acyl)-sphingosyl-1,3-cyclic phosphate + choline</text>
        <dbReference type="Rhea" id="RHEA:60652"/>
        <dbReference type="ChEBI" id="CHEBI:15354"/>
        <dbReference type="ChEBI" id="CHEBI:64583"/>
        <dbReference type="ChEBI" id="CHEBI:143892"/>
    </reaction>
</comment>
<comment type="catalytic activity">
    <reaction evidence="1">
        <text>an N-(acyl)-sphingosylphosphoethanolamine = an N-(acyl)-sphingosyl-1,3-cyclic phosphate + ethanolamine</text>
        <dbReference type="Rhea" id="RHEA:60648"/>
        <dbReference type="ChEBI" id="CHEBI:57603"/>
        <dbReference type="ChEBI" id="CHEBI:143891"/>
        <dbReference type="ChEBI" id="CHEBI:143892"/>
    </reaction>
</comment>
<comment type="catalytic activity">
    <reaction evidence="1">
        <text>a 1-acyl-sn-glycero-3-phosphocholine = a 1-acyl-sn-glycero-2,3-cyclic phosphate + choline</text>
        <dbReference type="Rhea" id="RHEA:60700"/>
        <dbReference type="ChEBI" id="CHEBI:15354"/>
        <dbReference type="ChEBI" id="CHEBI:58168"/>
        <dbReference type="ChEBI" id="CHEBI:143947"/>
    </reaction>
</comment>
<comment type="catalytic activity">
    <reaction evidence="1">
        <text>a 1-acyl-sn-glycero-3-phosphoethanolamine = a 1-acyl-sn-glycero-2,3-cyclic phosphate + ethanolamine</text>
        <dbReference type="Rhea" id="RHEA:60704"/>
        <dbReference type="ChEBI" id="CHEBI:57603"/>
        <dbReference type="ChEBI" id="CHEBI:64381"/>
        <dbReference type="ChEBI" id="CHEBI:143947"/>
    </reaction>
</comment>
<comment type="cofactor">
    <cofactor evidence="5">
        <name>Mg(2+)</name>
        <dbReference type="ChEBI" id="CHEBI:18420"/>
    </cofactor>
    <text evidence="5">Binds 1 Mg(2+) ion per subunit.</text>
</comment>
<comment type="subcellular location">
    <subcellularLocation>
        <location evidence="8">Secreted</location>
    </subcellularLocation>
</comment>
<comment type="tissue specificity">
    <text evidence="8">Expressed by the venom gland.</text>
</comment>
<comment type="similarity">
    <text evidence="7">Belongs to the arthropod phospholipase D family. Class II subfamily.</text>
</comment>
<comment type="caution">
    <text evidence="1 2 4">The most common activity assay for dermonecrotic toxins detects enzymatic activity by monitoring choline release from substrate. Liberation of choline from sphingomyelin (SM) or lysophosphatidylcholine (LPC) is commonly assumed to result from substrate hydrolysis, giving either ceramide-1-phosphate (C1P) or lysophosphatidic acid (LPA), respectively, as a second product. However, two studies from Lajoie and colleagues (2013 and 2015) report the observation of exclusive formation of cyclic phosphate products as second products, resulting from intramolecular transphosphatidylation. Cyclic phosphates have vastly different biological properties from their monoester counterparts, and they may be relevant to the pathology of brown spider envenomation.</text>
</comment>
<feature type="chain" id="PRO_0000392866" description="Dermonecrotic toxin LspiSicTox-betaIE4ii">
    <location>
        <begin position="1" status="less than"/>
        <end position="276"/>
    </location>
</feature>
<feature type="active site" evidence="5">
    <location>
        <position position="5"/>
    </location>
</feature>
<feature type="active site" description="Nucleophile" evidence="5">
    <location>
        <position position="41"/>
    </location>
</feature>
<feature type="binding site" evidence="5">
    <location>
        <position position="25"/>
    </location>
    <ligand>
        <name>Mg(2+)</name>
        <dbReference type="ChEBI" id="CHEBI:18420"/>
    </ligand>
</feature>
<feature type="binding site" evidence="5">
    <location>
        <position position="27"/>
    </location>
    <ligand>
        <name>Mg(2+)</name>
        <dbReference type="ChEBI" id="CHEBI:18420"/>
    </ligand>
</feature>
<feature type="binding site" evidence="5">
    <location>
        <position position="85"/>
    </location>
    <ligand>
        <name>Mg(2+)</name>
        <dbReference type="ChEBI" id="CHEBI:18420"/>
    </ligand>
</feature>
<feature type="disulfide bond" evidence="3">
    <location>
        <begin position="45"/>
        <end position="51"/>
    </location>
</feature>
<feature type="disulfide bond" evidence="3">
    <location>
        <begin position="47"/>
        <end position="189"/>
    </location>
</feature>
<feature type="non-terminal residue">
    <location>
        <position position="1"/>
    </location>
</feature>
<reference key="1">
    <citation type="journal article" date="2009" name="Mol. Biol. Evol.">
        <title>Molecular evolution, functional variation, and proposed nomenclature of the gene family that includes sphingomyelinase D in sicariid spider venoms.</title>
        <authorList>
            <person name="Binford G.J."/>
            <person name="Bodner M.R."/>
            <person name="Cordes M.H."/>
            <person name="Baldwin K.L."/>
            <person name="Rynerson M.R."/>
            <person name="Burns S.N."/>
            <person name="Zobel-Thropp P.A."/>
        </authorList>
    </citation>
    <scope>NUCLEOTIDE SEQUENCE [MRNA]</scope>
    <scope>NOMENCLATURE</scope>
    <source>
        <strain>Borakalalo</strain>
        <tissue>Venom gland</tissue>
    </source>
</reference>
<accession>C0JB47</accession>
<proteinExistence type="evidence at transcript level"/>
<protein>
    <recommendedName>
        <fullName evidence="6">Dermonecrotic toxin LspiSicTox-betaIE4ii</fullName>
        <ecNumber evidence="4">4.6.1.-</ecNumber>
    </recommendedName>
    <alternativeName>
        <fullName>Phospholipase D</fullName>
        <shortName>PLD</shortName>
    </alternativeName>
    <alternativeName>
        <fullName>Sphingomyelin phosphodiesterase D</fullName>
        <shortName>SMD</shortName>
        <shortName>SMase D</shortName>
        <shortName>Sphingomyelinase D</shortName>
    </alternativeName>
</protein>
<organism>
    <name type="scientific">Loxosceles spinulosa</name>
    <name type="common">Recluse spider</name>
    <dbReference type="NCBI Taxonomy" id="571532"/>
    <lineage>
        <taxon>Eukaryota</taxon>
        <taxon>Metazoa</taxon>
        <taxon>Ecdysozoa</taxon>
        <taxon>Arthropoda</taxon>
        <taxon>Chelicerata</taxon>
        <taxon>Arachnida</taxon>
        <taxon>Araneae</taxon>
        <taxon>Araneomorphae</taxon>
        <taxon>Haplogynae</taxon>
        <taxon>Scytodoidea</taxon>
        <taxon>Sicariidae</taxon>
        <taxon>Loxosceles</taxon>
    </lineage>
</organism>
<evidence type="ECO:0000250" key="1">
    <source>
        <dbReference type="UniProtKB" id="A0A0D4WTV1"/>
    </source>
</evidence>
<evidence type="ECO:0000250" key="2">
    <source>
        <dbReference type="UniProtKB" id="A0A0D4WV12"/>
    </source>
</evidence>
<evidence type="ECO:0000250" key="3">
    <source>
        <dbReference type="UniProtKB" id="P0CE80"/>
    </source>
</evidence>
<evidence type="ECO:0000250" key="4">
    <source>
        <dbReference type="UniProtKB" id="Q4ZFU2"/>
    </source>
</evidence>
<evidence type="ECO:0000250" key="5">
    <source>
        <dbReference type="UniProtKB" id="Q8I914"/>
    </source>
</evidence>
<evidence type="ECO:0000303" key="6">
    <source>
    </source>
</evidence>
<evidence type="ECO:0000305" key="7"/>
<evidence type="ECO:0000305" key="8">
    <source>
    </source>
</evidence>